<gene>
    <name evidence="1" type="primary">rplY</name>
    <name evidence="1" type="synonym">ctc</name>
    <name type="ordered locus">Bxeno_A0328</name>
    <name type="ORF">Bxe_A4134</name>
</gene>
<accession>Q145X3</accession>
<sequence length="207" mass="22214">MKVVAFERSLQGTGASRRLRNSGKTPGIVYGAGAETQLVELDHNALWHALKKEVFHSSILDLEVAGKSQQVLLRDVQYHPFRQLVLHVDFQRVDAKKKLHTKVPLHFLNQETNPAVKLSSAVISHVINEIEIECLPSALPEFLEVDLATIEAGHSVHAKDIKLPAGVTLVAHVEAENPVIAAATIPAGAIAEGEAAAAEGEGETPAA</sequence>
<proteinExistence type="inferred from homology"/>
<comment type="function">
    <text evidence="1">This is one of the proteins that binds to the 5S RNA in the ribosome where it forms part of the central protuberance.</text>
</comment>
<comment type="subunit">
    <text evidence="1">Part of the 50S ribosomal subunit; part of the 5S rRNA/L5/L18/L25 subcomplex. Contacts the 5S rRNA. Binds to the 5S rRNA independently of L5 and L18.</text>
</comment>
<comment type="similarity">
    <text evidence="1">Belongs to the bacterial ribosomal protein bL25 family. CTC subfamily.</text>
</comment>
<name>RL25_PARXL</name>
<keyword id="KW-1185">Reference proteome</keyword>
<keyword id="KW-0687">Ribonucleoprotein</keyword>
<keyword id="KW-0689">Ribosomal protein</keyword>
<keyword id="KW-0694">RNA-binding</keyword>
<keyword id="KW-0699">rRNA-binding</keyword>
<organism>
    <name type="scientific">Paraburkholderia xenovorans (strain LB400)</name>
    <dbReference type="NCBI Taxonomy" id="266265"/>
    <lineage>
        <taxon>Bacteria</taxon>
        <taxon>Pseudomonadati</taxon>
        <taxon>Pseudomonadota</taxon>
        <taxon>Betaproteobacteria</taxon>
        <taxon>Burkholderiales</taxon>
        <taxon>Burkholderiaceae</taxon>
        <taxon>Paraburkholderia</taxon>
    </lineage>
</organism>
<feature type="chain" id="PRO_1000052877" description="Large ribosomal subunit protein bL25">
    <location>
        <begin position="1"/>
        <end position="207"/>
    </location>
</feature>
<protein>
    <recommendedName>
        <fullName evidence="1">Large ribosomal subunit protein bL25</fullName>
    </recommendedName>
    <alternativeName>
        <fullName evidence="2">50S ribosomal protein L25</fullName>
    </alternativeName>
    <alternativeName>
        <fullName evidence="1">General stress protein CTC</fullName>
    </alternativeName>
</protein>
<reference key="1">
    <citation type="journal article" date="2006" name="Proc. Natl. Acad. Sci. U.S.A.">
        <title>Burkholderia xenovorans LB400 harbors a multi-replicon, 9.73-Mbp genome shaped for versatility.</title>
        <authorList>
            <person name="Chain P.S.G."/>
            <person name="Denef V.J."/>
            <person name="Konstantinidis K.T."/>
            <person name="Vergez L.M."/>
            <person name="Agullo L."/>
            <person name="Reyes V.L."/>
            <person name="Hauser L."/>
            <person name="Cordova M."/>
            <person name="Gomez L."/>
            <person name="Gonzalez M."/>
            <person name="Land M."/>
            <person name="Lao V."/>
            <person name="Larimer F."/>
            <person name="LiPuma J.J."/>
            <person name="Mahenthiralingam E."/>
            <person name="Malfatti S.A."/>
            <person name="Marx C.J."/>
            <person name="Parnell J.J."/>
            <person name="Ramette A."/>
            <person name="Richardson P."/>
            <person name="Seeger M."/>
            <person name="Smith D."/>
            <person name="Spilker T."/>
            <person name="Sul W.J."/>
            <person name="Tsoi T.V."/>
            <person name="Ulrich L.E."/>
            <person name="Zhulin I.B."/>
            <person name="Tiedje J.M."/>
        </authorList>
    </citation>
    <scope>NUCLEOTIDE SEQUENCE [LARGE SCALE GENOMIC DNA]</scope>
    <source>
        <strain>LB400</strain>
    </source>
</reference>
<dbReference type="EMBL" id="CP000270">
    <property type="protein sequence ID" value="ABE28866.1"/>
    <property type="molecule type" value="Genomic_DNA"/>
</dbReference>
<dbReference type="RefSeq" id="WP_011486698.1">
    <property type="nucleotide sequence ID" value="NC_007951.1"/>
</dbReference>
<dbReference type="SMR" id="Q145X3"/>
<dbReference type="STRING" id="266265.Bxe_A4134"/>
<dbReference type="KEGG" id="bxb:DR64_1811"/>
<dbReference type="KEGG" id="bxe:Bxe_A4134"/>
<dbReference type="PATRIC" id="fig|266265.5.peg.348"/>
<dbReference type="eggNOG" id="COG1825">
    <property type="taxonomic scope" value="Bacteria"/>
</dbReference>
<dbReference type="OrthoDB" id="9806411at2"/>
<dbReference type="Proteomes" id="UP000001817">
    <property type="component" value="Chromosome 1"/>
</dbReference>
<dbReference type="GO" id="GO:0022625">
    <property type="term" value="C:cytosolic large ribosomal subunit"/>
    <property type="evidence" value="ECO:0007669"/>
    <property type="project" value="TreeGrafter"/>
</dbReference>
<dbReference type="GO" id="GO:0008097">
    <property type="term" value="F:5S rRNA binding"/>
    <property type="evidence" value="ECO:0007669"/>
    <property type="project" value="InterPro"/>
</dbReference>
<dbReference type="GO" id="GO:0003735">
    <property type="term" value="F:structural constituent of ribosome"/>
    <property type="evidence" value="ECO:0007669"/>
    <property type="project" value="InterPro"/>
</dbReference>
<dbReference type="GO" id="GO:0006412">
    <property type="term" value="P:translation"/>
    <property type="evidence" value="ECO:0007669"/>
    <property type="project" value="UniProtKB-UniRule"/>
</dbReference>
<dbReference type="CDD" id="cd00495">
    <property type="entry name" value="Ribosomal_L25_TL5_CTC"/>
    <property type="match status" value="1"/>
</dbReference>
<dbReference type="Gene3D" id="2.170.120.20">
    <property type="entry name" value="Ribosomal protein L25, beta domain"/>
    <property type="match status" value="1"/>
</dbReference>
<dbReference type="Gene3D" id="2.40.240.10">
    <property type="entry name" value="Ribosomal Protein L25, Chain P"/>
    <property type="match status" value="1"/>
</dbReference>
<dbReference type="HAMAP" id="MF_01334">
    <property type="entry name" value="Ribosomal_bL25_CTC"/>
    <property type="match status" value="1"/>
</dbReference>
<dbReference type="InterPro" id="IPR020056">
    <property type="entry name" value="Rbsml_bL25/Gln-tRNA_synth_N"/>
</dbReference>
<dbReference type="InterPro" id="IPR011035">
    <property type="entry name" value="Ribosomal_bL25/Gln-tRNA_synth"/>
</dbReference>
<dbReference type="InterPro" id="IPR020057">
    <property type="entry name" value="Ribosomal_bL25_b-dom"/>
</dbReference>
<dbReference type="InterPro" id="IPR037121">
    <property type="entry name" value="Ribosomal_bL25_C"/>
</dbReference>
<dbReference type="InterPro" id="IPR001021">
    <property type="entry name" value="Ribosomal_bL25_long"/>
</dbReference>
<dbReference type="InterPro" id="IPR029751">
    <property type="entry name" value="Ribosomal_L25_dom"/>
</dbReference>
<dbReference type="InterPro" id="IPR020930">
    <property type="entry name" value="Ribosomal_uL5_bac-type"/>
</dbReference>
<dbReference type="NCBIfam" id="TIGR00731">
    <property type="entry name" value="bL25_bact_ctc"/>
    <property type="match status" value="1"/>
</dbReference>
<dbReference type="NCBIfam" id="NF004128">
    <property type="entry name" value="PRK05618.1-2"/>
    <property type="match status" value="1"/>
</dbReference>
<dbReference type="NCBIfam" id="NF004130">
    <property type="entry name" value="PRK05618.1-5"/>
    <property type="match status" value="1"/>
</dbReference>
<dbReference type="NCBIfam" id="NF004612">
    <property type="entry name" value="PRK05943.1"/>
    <property type="match status" value="1"/>
</dbReference>
<dbReference type="PANTHER" id="PTHR33284">
    <property type="entry name" value="RIBOSOMAL PROTEIN L25/GLN-TRNA SYNTHETASE, ANTI-CODON-BINDING DOMAIN-CONTAINING PROTEIN"/>
    <property type="match status" value="1"/>
</dbReference>
<dbReference type="PANTHER" id="PTHR33284:SF1">
    <property type="entry name" value="RIBOSOMAL PROTEIN L25_GLN-TRNA SYNTHETASE, ANTI-CODON-BINDING DOMAIN-CONTAINING PROTEIN"/>
    <property type="match status" value="1"/>
</dbReference>
<dbReference type="Pfam" id="PF01386">
    <property type="entry name" value="Ribosomal_L25p"/>
    <property type="match status" value="1"/>
</dbReference>
<dbReference type="Pfam" id="PF14693">
    <property type="entry name" value="Ribosomal_TL5_C"/>
    <property type="match status" value="1"/>
</dbReference>
<dbReference type="SUPFAM" id="SSF50715">
    <property type="entry name" value="Ribosomal protein L25-like"/>
    <property type="match status" value="1"/>
</dbReference>
<evidence type="ECO:0000255" key="1">
    <source>
        <dbReference type="HAMAP-Rule" id="MF_01334"/>
    </source>
</evidence>
<evidence type="ECO:0000305" key="2"/>